<organism>
    <name type="scientific">Rhodococcus sp</name>
    <dbReference type="NCBI Taxonomy" id="1831"/>
    <lineage>
        <taxon>Bacteria</taxon>
        <taxon>Bacillati</taxon>
        <taxon>Actinomycetota</taxon>
        <taxon>Actinomycetes</taxon>
        <taxon>Mycobacteriales</taxon>
        <taxon>Nocardiaceae</taxon>
        <taxon>Rhodococcus</taxon>
    </lineage>
</organism>
<sequence>MPVALCAMSHSPLMGRNDPEQEVIDAVDAAFDHARRFVADFAPDLIVIFAPDHYNGVFYDLLPPFCIGAAAQSVGDYGTEAGPLDVDRDAAYAVARDVLDSGIDVAFSERMHVDHGFAQALQLLVGSITAVPTVPIFINSVAEPLGPVSRVRLLGEAVGRAAAKLDKRVLFVGSGGLSHDPPVPQFATAPEEVRERLIDGRNPSAAERDAREQRVITAGRDFAAGTAAIQPLNPEWDRHLLDVLASGDLEQIDAWTNDWFVEQAGHSSHEVRTWIAAYAAMSAAGKYRVTSTFYREIHEWIAGFGITTAVAVDE</sequence>
<protein>
    <recommendedName>
        <fullName>2,3-dihydroxyphenylpropionate/2,3-dihydroxicinnamic acid 1,2-dioxygenase</fullName>
        <ecNumber>1.13.11.16</ecNumber>
    </recommendedName>
    <alternativeName>
        <fullName>3-carboxyethylcatechol 2,3-dioxygenase</fullName>
    </alternativeName>
</protein>
<name>MHPB_RHOSO</name>
<evidence type="ECO:0000250" key="1"/>
<evidence type="ECO:0000269" key="2">
    <source>
    </source>
</evidence>
<evidence type="ECO:0000305" key="3"/>
<accession>Q9KH19</accession>
<keyword id="KW-0058">Aromatic hydrocarbons catabolism</keyword>
<keyword id="KW-0223">Dioxygenase</keyword>
<keyword id="KW-0408">Iron</keyword>
<keyword id="KW-0560">Oxidoreductase</keyword>
<dbReference type="EC" id="1.13.11.16"/>
<dbReference type="EMBL" id="AF274045">
    <property type="protein sequence ID" value="AAF81826.1"/>
    <property type="molecule type" value="Genomic_DNA"/>
</dbReference>
<dbReference type="SMR" id="Q9KH19"/>
<dbReference type="SABIO-RK" id="Q9KH19"/>
<dbReference type="UniPathway" id="UPA00714"/>
<dbReference type="GO" id="GO:0047070">
    <property type="term" value="F:3-carboxyethylcatechol 2,3-dioxygenase activity"/>
    <property type="evidence" value="ECO:0007669"/>
    <property type="project" value="UniProtKB-UniRule"/>
</dbReference>
<dbReference type="GO" id="GO:0008198">
    <property type="term" value="F:ferrous iron binding"/>
    <property type="evidence" value="ECO:0007669"/>
    <property type="project" value="InterPro"/>
</dbReference>
<dbReference type="GO" id="GO:0019380">
    <property type="term" value="P:3-phenylpropionate catabolic process"/>
    <property type="evidence" value="ECO:0007669"/>
    <property type="project" value="UniProtKB-UniRule"/>
</dbReference>
<dbReference type="CDD" id="cd07365">
    <property type="entry name" value="MhpB_like"/>
    <property type="match status" value="1"/>
</dbReference>
<dbReference type="Gene3D" id="3.40.830.10">
    <property type="entry name" value="LigB-like"/>
    <property type="match status" value="1"/>
</dbReference>
<dbReference type="HAMAP" id="MF_01653">
    <property type="entry name" value="MhpB"/>
    <property type="match status" value="1"/>
</dbReference>
<dbReference type="InterPro" id="IPR023789">
    <property type="entry name" value="DHPP/DHXA_dioxygenase"/>
</dbReference>
<dbReference type="InterPro" id="IPR004183">
    <property type="entry name" value="Xdiol_dOase_suB"/>
</dbReference>
<dbReference type="NCBIfam" id="NF009910">
    <property type="entry name" value="PRK13370.1-4"/>
    <property type="match status" value="1"/>
</dbReference>
<dbReference type="Pfam" id="PF02900">
    <property type="entry name" value="LigB"/>
    <property type="match status" value="1"/>
</dbReference>
<dbReference type="SUPFAM" id="SSF53213">
    <property type="entry name" value="LigB-like"/>
    <property type="match status" value="1"/>
</dbReference>
<gene>
    <name type="primary">mhpB</name>
    <name type="synonym">ohpD</name>
</gene>
<comment type="function">
    <text>Catalyzes the non-heme iron(II)-dependent oxidative cleavage of 2,3-dihydroxyphenylpropionic acid and 2,3-dihydroxicinnamic acid into 2-hydroxy-6-ketononadienedioate and 2-hydroxy-6-ketononatrienedioate, respectively. Also catalyzes the cleavage of catechol.</text>
</comment>
<comment type="catalytic activity">
    <reaction evidence="2">
        <text>3-(2,3-dihydroxyphenyl)propanoate + O2 = (2Z,4E)-2-hydroxy-6-oxonona-2,4-dienedioate + H(+)</text>
        <dbReference type="Rhea" id="RHEA:23840"/>
        <dbReference type="ChEBI" id="CHEBI:15378"/>
        <dbReference type="ChEBI" id="CHEBI:15379"/>
        <dbReference type="ChEBI" id="CHEBI:46951"/>
        <dbReference type="ChEBI" id="CHEBI:66887"/>
        <dbReference type="EC" id="1.13.11.16"/>
    </reaction>
</comment>
<comment type="catalytic activity">
    <reaction evidence="2">
        <text>(2E)-3-(2,3-dihydroxyphenyl)prop-2-enoate + O2 = (2Z,4E,7E)-2-hydroxy-6-oxonona-2,4,7-trienedioate + H(+)</text>
        <dbReference type="Rhea" id="RHEA:25054"/>
        <dbReference type="ChEBI" id="CHEBI:15378"/>
        <dbReference type="ChEBI" id="CHEBI:15379"/>
        <dbReference type="ChEBI" id="CHEBI:58642"/>
        <dbReference type="ChEBI" id="CHEBI:66888"/>
        <dbReference type="EC" id="1.13.11.16"/>
    </reaction>
</comment>
<comment type="cofactor">
    <cofactor evidence="1">
        <name>Fe(2+)</name>
        <dbReference type="ChEBI" id="CHEBI:29033"/>
    </cofactor>
</comment>
<comment type="biophysicochemical properties">
    <kinetics>
        <KM evidence="2">30 uM for 3-(2,3-dihydroxyphenyl) propionic acid (at pH 8.1 and 8 degrees Celsius)</KM>
        <KM evidence="2">47 uM for catechol (at pH 8.1 and 8 degrees Celsius)</KM>
        <KM evidence="2">62 uM for 3-methylcatechol (at pH 8.1 and 8 degrees Celsius)</KM>
    </kinetics>
</comment>
<comment type="pathway">
    <text>Aromatic compound metabolism; 3-phenylpropanoate degradation.</text>
</comment>
<comment type="subunit">
    <text evidence="1">Homotetramer.</text>
</comment>
<comment type="similarity">
    <text evidence="3">Belongs to the LigB/MhpB extradiol dioxygenase family.</text>
</comment>
<reference key="1">
    <citation type="journal article" date="1998" name="Antonie Van Leeuwenhoek">
        <title>Molecular characterisation of a Rhodococcus ohp operon.</title>
        <authorList>
            <person name="Powell J.A."/>
            <person name="Archer J.A."/>
        </authorList>
    </citation>
    <scope>NUCLEOTIDE SEQUENCE [GENOMIC DNA]</scope>
    <scope>CATALYTIC ACTIVITY</scope>
    <scope>BIOPHYSICOCHEMICAL PROPERTIES</scope>
    <source>
        <strain>ATCC 19070 / V49</strain>
    </source>
</reference>
<proteinExistence type="evidence at protein level"/>
<feature type="chain" id="PRO_0000337667" description="2,3-dihydroxyphenylpropionate/2,3-dihydroxicinnamic acid 1,2-dioxygenase">
    <location>
        <begin position="1"/>
        <end position="314"/>
    </location>
</feature>
<feature type="active site" description="Proton donor" evidence="1">
    <location>
        <position position="115"/>
    </location>
</feature>
<feature type="active site" description="Proton acceptor" evidence="1">
    <location>
        <position position="179"/>
    </location>
</feature>